<protein>
    <recommendedName>
        <fullName>Asteroid homolog 1</fullName>
    </recommendedName>
</protein>
<reference key="1">
    <citation type="journal article" date="2002" name="Nature">
        <title>The genome sequence of Schizosaccharomyces pombe.</title>
        <authorList>
            <person name="Wood V."/>
            <person name="Gwilliam R."/>
            <person name="Rajandream M.A."/>
            <person name="Lyne M.H."/>
            <person name="Lyne R."/>
            <person name="Stewart A."/>
            <person name="Sgouros J.G."/>
            <person name="Peat N."/>
            <person name="Hayles J."/>
            <person name="Baker S.G."/>
            <person name="Basham D."/>
            <person name="Bowman S."/>
            <person name="Brooks K."/>
            <person name="Brown D."/>
            <person name="Brown S."/>
            <person name="Chillingworth T."/>
            <person name="Churcher C.M."/>
            <person name="Collins M."/>
            <person name="Connor R."/>
            <person name="Cronin A."/>
            <person name="Davis P."/>
            <person name="Feltwell T."/>
            <person name="Fraser A."/>
            <person name="Gentles S."/>
            <person name="Goble A."/>
            <person name="Hamlin N."/>
            <person name="Harris D.E."/>
            <person name="Hidalgo J."/>
            <person name="Hodgson G."/>
            <person name="Holroyd S."/>
            <person name="Hornsby T."/>
            <person name="Howarth S."/>
            <person name="Huckle E.J."/>
            <person name="Hunt S."/>
            <person name="Jagels K."/>
            <person name="James K.D."/>
            <person name="Jones L."/>
            <person name="Jones M."/>
            <person name="Leather S."/>
            <person name="McDonald S."/>
            <person name="McLean J."/>
            <person name="Mooney P."/>
            <person name="Moule S."/>
            <person name="Mungall K.L."/>
            <person name="Murphy L.D."/>
            <person name="Niblett D."/>
            <person name="Odell C."/>
            <person name="Oliver K."/>
            <person name="O'Neil S."/>
            <person name="Pearson D."/>
            <person name="Quail M.A."/>
            <person name="Rabbinowitsch E."/>
            <person name="Rutherford K.M."/>
            <person name="Rutter S."/>
            <person name="Saunders D."/>
            <person name="Seeger K."/>
            <person name="Sharp S."/>
            <person name="Skelton J."/>
            <person name="Simmonds M.N."/>
            <person name="Squares R."/>
            <person name="Squares S."/>
            <person name="Stevens K."/>
            <person name="Taylor K."/>
            <person name="Taylor R.G."/>
            <person name="Tivey A."/>
            <person name="Walsh S.V."/>
            <person name="Warren T."/>
            <person name="Whitehead S."/>
            <person name="Woodward J.R."/>
            <person name="Volckaert G."/>
            <person name="Aert R."/>
            <person name="Robben J."/>
            <person name="Grymonprez B."/>
            <person name="Weltjens I."/>
            <person name="Vanstreels E."/>
            <person name="Rieger M."/>
            <person name="Schaefer M."/>
            <person name="Mueller-Auer S."/>
            <person name="Gabel C."/>
            <person name="Fuchs M."/>
            <person name="Duesterhoeft A."/>
            <person name="Fritzc C."/>
            <person name="Holzer E."/>
            <person name="Moestl D."/>
            <person name="Hilbert H."/>
            <person name="Borzym K."/>
            <person name="Langer I."/>
            <person name="Beck A."/>
            <person name="Lehrach H."/>
            <person name="Reinhardt R."/>
            <person name="Pohl T.M."/>
            <person name="Eger P."/>
            <person name="Zimmermann W."/>
            <person name="Wedler H."/>
            <person name="Wambutt R."/>
            <person name="Purnelle B."/>
            <person name="Goffeau A."/>
            <person name="Cadieu E."/>
            <person name="Dreano S."/>
            <person name="Gloux S."/>
            <person name="Lelaure V."/>
            <person name="Mottier S."/>
            <person name="Galibert F."/>
            <person name="Aves S.J."/>
            <person name="Xiang Z."/>
            <person name="Hunt C."/>
            <person name="Moore K."/>
            <person name="Hurst S.M."/>
            <person name="Lucas M."/>
            <person name="Rochet M."/>
            <person name="Gaillardin C."/>
            <person name="Tallada V.A."/>
            <person name="Garzon A."/>
            <person name="Thode G."/>
            <person name="Daga R.R."/>
            <person name="Cruzado L."/>
            <person name="Jimenez J."/>
            <person name="Sanchez M."/>
            <person name="del Rey F."/>
            <person name="Benito J."/>
            <person name="Dominguez A."/>
            <person name="Revuelta J.L."/>
            <person name="Moreno S."/>
            <person name="Armstrong J."/>
            <person name="Forsburg S.L."/>
            <person name="Cerutti L."/>
            <person name="Lowe T."/>
            <person name="McCombie W.R."/>
            <person name="Paulsen I."/>
            <person name="Potashkin J."/>
            <person name="Shpakovski G.V."/>
            <person name="Ussery D."/>
            <person name="Barrell B.G."/>
            <person name="Nurse P."/>
        </authorList>
    </citation>
    <scope>NUCLEOTIDE SEQUENCE [LARGE SCALE GENOMIC DNA]</scope>
    <source>
        <strain>972 / ATCC 24843</strain>
    </source>
</reference>
<reference key="2">
    <citation type="journal article" date="2006" name="Nat. Biotechnol.">
        <title>ORFeome cloning and global analysis of protein localization in the fission yeast Schizosaccharomyces pombe.</title>
        <authorList>
            <person name="Matsuyama A."/>
            <person name="Arai R."/>
            <person name="Yashiroda Y."/>
            <person name="Shirai A."/>
            <person name="Kamata A."/>
            <person name="Sekido S."/>
            <person name="Kobayashi Y."/>
            <person name="Hashimoto A."/>
            <person name="Hamamoto M."/>
            <person name="Hiraoka Y."/>
            <person name="Horinouchi S."/>
            <person name="Yoshida M."/>
        </authorList>
    </citation>
    <scope>SUBCELLULAR LOCATION [LARGE SCALE ANALYSIS]</scope>
</reference>
<comment type="subcellular location">
    <subcellularLocation>
        <location evidence="1">Cytoplasm</location>
    </subcellularLocation>
    <subcellularLocation>
        <location evidence="1">Mitochondrion</location>
    </subcellularLocation>
</comment>
<comment type="similarity">
    <text evidence="2">Belongs to the asteroid family.</text>
</comment>
<organism>
    <name type="scientific">Schizosaccharomyces pombe (strain 972 / ATCC 24843)</name>
    <name type="common">Fission yeast</name>
    <dbReference type="NCBI Taxonomy" id="284812"/>
    <lineage>
        <taxon>Eukaryota</taxon>
        <taxon>Fungi</taxon>
        <taxon>Dikarya</taxon>
        <taxon>Ascomycota</taxon>
        <taxon>Taphrinomycotina</taxon>
        <taxon>Schizosaccharomycetes</taxon>
        <taxon>Schizosaccharomycetales</taxon>
        <taxon>Schizosaccharomycetaceae</taxon>
        <taxon>Schizosaccharomyces</taxon>
    </lineage>
</organism>
<feature type="chain" id="PRO_0000116536" description="Asteroid homolog 1">
    <location>
        <begin position="1"/>
        <end position="519"/>
    </location>
</feature>
<name>AST1_SCHPO</name>
<keyword id="KW-0963">Cytoplasm</keyword>
<keyword id="KW-0496">Mitochondrion</keyword>
<keyword id="KW-1185">Reference proteome</keyword>
<accession>O14061</accession>
<gene>
    <name type="primary">ast1</name>
    <name type="ORF">SPCC962.05</name>
</gene>
<dbReference type="EMBL" id="CU329672">
    <property type="protein sequence ID" value="CAA20437.2"/>
    <property type="molecule type" value="Genomic_DNA"/>
</dbReference>
<dbReference type="PIR" id="T41652">
    <property type="entry name" value="T41652"/>
</dbReference>
<dbReference type="RefSeq" id="NP_587870.2">
    <property type="nucleotide sequence ID" value="NM_001022862.3"/>
</dbReference>
<dbReference type="BioGRID" id="276048">
    <property type="interactions" value="6"/>
</dbReference>
<dbReference type="STRING" id="284812.O14061"/>
<dbReference type="iPTMnet" id="O14061"/>
<dbReference type="PaxDb" id="4896-SPCC962.05.1"/>
<dbReference type="EnsemblFungi" id="SPCC962.05.1">
    <property type="protein sequence ID" value="SPCC962.05.1:pep"/>
    <property type="gene ID" value="SPCC962.05"/>
</dbReference>
<dbReference type="GeneID" id="2539485"/>
<dbReference type="KEGG" id="spo:2539485"/>
<dbReference type="PomBase" id="SPCC962.05">
    <property type="gene designation" value="ast1"/>
</dbReference>
<dbReference type="VEuPathDB" id="FungiDB:SPCC962.05"/>
<dbReference type="HOGENOM" id="CLU_526930_0_0_1"/>
<dbReference type="InParanoid" id="O14061"/>
<dbReference type="OMA" id="AFAYWLW"/>
<dbReference type="PRO" id="PR:O14061"/>
<dbReference type="Proteomes" id="UP000002485">
    <property type="component" value="Chromosome III"/>
</dbReference>
<dbReference type="GO" id="GO:0005739">
    <property type="term" value="C:mitochondrion"/>
    <property type="evidence" value="ECO:0007669"/>
    <property type="project" value="UniProtKB-SubCell"/>
</dbReference>
<dbReference type="GO" id="GO:0005634">
    <property type="term" value="C:nucleus"/>
    <property type="evidence" value="ECO:0000305"/>
    <property type="project" value="PomBase"/>
</dbReference>
<dbReference type="GO" id="GO:0035861">
    <property type="term" value="C:site of double-strand break"/>
    <property type="evidence" value="ECO:0000314"/>
    <property type="project" value="PomBase"/>
</dbReference>
<dbReference type="GO" id="GO:0004518">
    <property type="term" value="F:nuclease activity"/>
    <property type="evidence" value="ECO:0000250"/>
    <property type="project" value="PomBase"/>
</dbReference>
<dbReference type="GO" id="GO:0006281">
    <property type="term" value="P:DNA repair"/>
    <property type="evidence" value="ECO:0000255"/>
    <property type="project" value="PomBase"/>
</dbReference>
<dbReference type="CDD" id="cd18675">
    <property type="entry name" value="PIN_SpAst1-like"/>
    <property type="match status" value="1"/>
</dbReference>
<dbReference type="Gene3D" id="3.40.50.1010">
    <property type="entry name" value="5'-nuclease"/>
    <property type="match status" value="1"/>
</dbReference>
<dbReference type="InterPro" id="IPR026832">
    <property type="entry name" value="Asteroid"/>
</dbReference>
<dbReference type="InterPro" id="IPR039436">
    <property type="entry name" value="Asteroid_dom"/>
</dbReference>
<dbReference type="InterPro" id="IPR029060">
    <property type="entry name" value="PIN-like_dom_sf"/>
</dbReference>
<dbReference type="PANTHER" id="PTHR15665">
    <property type="entry name" value="ASTEROID PROTEIN"/>
    <property type="match status" value="1"/>
</dbReference>
<dbReference type="PANTHER" id="PTHR15665:SF1">
    <property type="entry name" value="PROTEIN ASTEROID HOMOLOG 1"/>
    <property type="match status" value="1"/>
</dbReference>
<dbReference type="Pfam" id="PF12813">
    <property type="entry name" value="XPG_I_2"/>
    <property type="match status" value="1"/>
</dbReference>
<dbReference type="SUPFAM" id="SSF88723">
    <property type="entry name" value="PIN domain-like"/>
    <property type="match status" value="1"/>
</dbReference>
<evidence type="ECO:0000269" key="1">
    <source>
    </source>
</evidence>
<evidence type="ECO:0000305" key="2"/>
<sequence length="519" mass="59951">MGVPRLGRFLEPFGKPVYFSSYPEVPLNCSLVIDGPSFAFWLWFSQGIVCSDFQGYQKAVLDFHHLLSRLRFKEIEYIFDGGLPFSKHQVRVNRYQQKINDLRSAYINLCVPIAQHVLMGLAKAKVIVCNEEADKYCAFQAKKLDAVILSQDSDFLLYDIDTPHYGYIPLQSLDVTSNGISGRKYRFDEIQKDFHFDLHILAAYLGVEGHPLDLVIDYHNTFEHICKILENSVKDKFIEKLVSKEELTRVHAFYSLNDLKLETSTINTFMWGRVQELLNSQLQPAEIWLPQLLELPSKHCSWLESAPLRLQAYANFSKQMPEFGTEVLEYFRLSDRLSKRLISVDYDYATVCETLDSKFSNWNLPHRLVLWTLRCMKNLNNITATSFLLMHVSLFLGSPMNLQPVEPTQEDIASVSRFIATIYSICMLIFSEDKEQSSISFQEFVSFSPLSSTLNFALFHQAASKLKTGKSPLSIVTDKTTASLTYKMYKDLTNDYSDIYMIMDIWKPKRKRKTKKDQS</sequence>
<proteinExistence type="inferred from homology"/>